<organism>
    <name type="scientific">Homo sapiens</name>
    <name type="common">Human</name>
    <dbReference type="NCBI Taxonomy" id="9606"/>
    <lineage>
        <taxon>Eukaryota</taxon>
        <taxon>Metazoa</taxon>
        <taxon>Chordata</taxon>
        <taxon>Craniata</taxon>
        <taxon>Vertebrata</taxon>
        <taxon>Euteleostomi</taxon>
        <taxon>Mammalia</taxon>
        <taxon>Eutheria</taxon>
        <taxon>Euarchontoglires</taxon>
        <taxon>Primates</taxon>
        <taxon>Haplorrhini</taxon>
        <taxon>Catarrhini</taxon>
        <taxon>Hominidae</taxon>
        <taxon>Homo</taxon>
    </lineage>
</organism>
<accession>Q13885</accession>
<accession>Q6FGZ8</accession>
<accession>Q8IWR2</accession>
<gene>
    <name type="primary">TUBB2A</name>
    <name type="synonym">TUBB2</name>
</gene>
<feature type="chain" id="PRO_0000262648" description="Tubulin beta-2A chain">
    <location>
        <begin position="1"/>
        <end position="445"/>
    </location>
</feature>
<feature type="region of interest" description="Disordered" evidence="7">
    <location>
        <begin position="422"/>
        <end position="445"/>
    </location>
</feature>
<feature type="short sequence motif" description="MREI motif" evidence="2">
    <location>
        <begin position="1"/>
        <end position="4"/>
    </location>
</feature>
<feature type="compositionally biased region" description="Acidic residues" evidence="7">
    <location>
        <begin position="429"/>
        <end position="445"/>
    </location>
</feature>
<feature type="binding site" evidence="5">
    <location>
        <position position="11"/>
    </location>
    <ligand>
        <name>GTP</name>
        <dbReference type="ChEBI" id="CHEBI:37565"/>
    </ligand>
</feature>
<feature type="binding site" evidence="3">
    <location>
        <position position="69"/>
    </location>
    <ligand>
        <name>GTP</name>
        <dbReference type="ChEBI" id="CHEBI:37565"/>
    </ligand>
</feature>
<feature type="binding site" evidence="3">
    <location>
        <position position="69"/>
    </location>
    <ligand>
        <name>Mg(2+)</name>
        <dbReference type="ChEBI" id="CHEBI:18420"/>
    </ligand>
</feature>
<feature type="binding site" evidence="5">
    <location>
        <position position="138"/>
    </location>
    <ligand>
        <name>GTP</name>
        <dbReference type="ChEBI" id="CHEBI:37565"/>
    </ligand>
</feature>
<feature type="binding site" evidence="5">
    <location>
        <position position="142"/>
    </location>
    <ligand>
        <name>GTP</name>
        <dbReference type="ChEBI" id="CHEBI:37565"/>
    </ligand>
</feature>
<feature type="binding site" evidence="5">
    <location>
        <position position="143"/>
    </location>
    <ligand>
        <name>GTP</name>
        <dbReference type="ChEBI" id="CHEBI:37565"/>
    </ligand>
</feature>
<feature type="binding site" evidence="5">
    <location>
        <position position="144"/>
    </location>
    <ligand>
        <name>GTP</name>
        <dbReference type="ChEBI" id="CHEBI:37565"/>
    </ligand>
</feature>
<feature type="binding site" evidence="5">
    <location>
        <position position="204"/>
    </location>
    <ligand>
        <name>GTP</name>
        <dbReference type="ChEBI" id="CHEBI:37565"/>
    </ligand>
</feature>
<feature type="binding site" evidence="5">
    <location>
        <position position="226"/>
    </location>
    <ligand>
        <name>GTP</name>
        <dbReference type="ChEBI" id="CHEBI:37565"/>
    </ligand>
</feature>
<feature type="modified residue" description="Phosphoserine" evidence="4">
    <location>
        <position position="40"/>
    </location>
</feature>
<feature type="modified residue" description="N6-acetyllysine; alternate" evidence="2">
    <location>
        <position position="58"/>
    </location>
</feature>
<feature type="modified residue" description="N6-succinyllysine; alternate" evidence="4">
    <location>
        <position position="58"/>
    </location>
</feature>
<feature type="modified residue" description="Phosphoserine; by CDK1" evidence="8">
    <location>
        <position position="172"/>
    </location>
</feature>
<feature type="modified residue" description="Phosphothreonine" evidence="2">
    <location>
        <position position="285"/>
    </location>
</feature>
<feature type="modified residue" description="Phosphothreonine" evidence="2">
    <location>
        <position position="290"/>
    </location>
</feature>
<feature type="modified residue" description="Omega-N-methylarginine" evidence="2">
    <location>
        <position position="318"/>
    </location>
</feature>
<feature type="modified residue" description="5-glutamyl polyglutamate" evidence="6">
    <location>
        <position position="438"/>
    </location>
</feature>
<feature type="cross-link" description="Glycyl lysine isopeptide (Lys-Gly) (interchain with G-Cter in ubiquitin); alternate" evidence="2">
    <location>
        <position position="58"/>
    </location>
</feature>
<feature type="cross-link" description="Glycyl lysine isopeptide (Lys-Gly) (interchain with G-Cter in ubiquitin)" evidence="2">
    <location>
        <position position="324"/>
    </location>
</feature>
<feature type="sequence variant" id="VAR_036197" description="In a colorectal cancer sample; somatic mutation; dbSNP:rs774124807." evidence="9">
    <original>R</original>
    <variation>W</variation>
    <location>
        <position position="62"/>
    </location>
</feature>
<feature type="sequence variant" id="VAR_071168" description="In CDCBM5; abolishes coassembly with tubulin subunits and incorporation into the microtubule polymer network; dbSNP:rs886037663." evidence="12">
    <original>N</original>
    <variation>K</variation>
    <location>
        <position position="247"/>
    </location>
</feature>
<feature type="sequence variant" id="VAR_071169" description="In CDCBM5; reduces coassembly with tubulin subunits and incorporation into the microtubule polymer network; dbSNP:rs2808001." evidence="12">
    <original>A</original>
    <variation>V</variation>
    <location>
        <position position="248"/>
    </location>
</feature>
<feature type="sequence conflict" description="In Ref. 2; AAN85571." evidence="14" ref="2">
    <original>Q</original>
    <variation>H</variation>
    <location>
        <position position="191"/>
    </location>
</feature>
<feature type="sequence conflict" description="In Ref. 3; CAG46756." evidence="14" ref="3">
    <original>I</original>
    <variation>H</variation>
    <location>
        <position position="202"/>
    </location>
</feature>
<feature type="sequence conflict" description="In Ref. 3; CAG46756." evidence="14" ref="3">
    <original>L</original>
    <variation>V</variation>
    <location>
        <position position="263"/>
    </location>
</feature>
<feature type="strand" evidence="16">
    <location>
        <begin position="3"/>
        <end position="9"/>
    </location>
</feature>
<feature type="helix" evidence="16">
    <location>
        <begin position="10"/>
        <end position="26"/>
    </location>
</feature>
<feature type="helix" evidence="16">
    <location>
        <begin position="42"/>
        <end position="45"/>
    </location>
</feature>
<feature type="turn" evidence="16">
    <location>
        <begin position="48"/>
        <end position="50"/>
    </location>
</feature>
<feature type="strand" evidence="16">
    <location>
        <begin position="51"/>
        <end position="53"/>
    </location>
</feature>
<feature type="strand" evidence="16">
    <location>
        <begin position="57"/>
        <end position="61"/>
    </location>
</feature>
<feature type="strand" evidence="16">
    <location>
        <begin position="63"/>
        <end position="69"/>
    </location>
</feature>
<feature type="helix" evidence="16">
    <location>
        <begin position="70"/>
        <end position="78"/>
    </location>
</feature>
<feature type="strand" evidence="16">
    <location>
        <begin position="83"/>
        <end position="85"/>
    </location>
</feature>
<feature type="strand" evidence="16">
    <location>
        <begin position="89"/>
        <end position="92"/>
    </location>
</feature>
<feature type="helix" evidence="16">
    <location>
        <begin position="101"/>
        <end position="105"/>
    </location>
</feature>
<feature type="helix" evidence="16">
    <location>
        <begin position="113"/>
        <end position="124"/>
    </location>
</feature>
<feature type="strand" evidence="16">
    <location>
        <begin position="128"/>
        <end position="141"/>
    </location>
</feature>
<feature type="helix" evidence="16">
    <location>
        <begin position="142"/>
        <end position="158"/>
    </location>
</feature>
<feature type="strand" evidence="16">
    <location>
        <begin position="162"/>
        <end position="169"/>
    </location>
</feature>
<feature type="strand" evidence="16">
    <location>
        <begin position="178"/>
        <end position="180"/>
    </location>
</feature>
<feature type="helix" evidence="16">
    <location>
        <begin position="181"/>
        <end position="195"/>
    </location>
</feature>
<feature type="strand" evidence="16">
    <location>
        <begin position="197"/>
        <end position="201"/>
    </location>
</feature>
<feature type="helix" evidence="16">
    <location>
        <begin position="204"/>
        <end position="215"/>
    </location>
</feature>
<feature type="helix" evidence="16">
    <location>
        <begin position="223"/>
        <end position="228"/>
    </location>
</feature>
<feature type="helix" evidence="16">
    <location>
        <begin position="230"/>
        <end position="236"/>
    </location>
</feature>
<feature type="helix" evidence="16">
    <location>
        <begin position="374"/>
        <end position="391"/>
    </location>
</feature>
<feature type="turn" evidence="16">
    <location>
        <begin position="392"/>
        <end position="394"/>
    </location>
</feature>
<feature type="helix" evidence="16">
    <location>
        <begin position="396"/>
        <end position="400"/>
    </location>
</feature>
<feature type="helix" evidence="16">
    <location>
        <begin position="405"/>
        <end position="423"/>
    </location>
</feature>
<name>TBB2A_HUMAN</name>
<reference key="1">
    <citation type="submission" date="1994-06" db="EMBL/GenBank/DDBJ databases">
        <title>Cloning and vaccinia virus expression of a cDNA containing the complete coding sequence of human beta tubulin mRNA.</title>
        <authorList>
            <person name="Leffers H."/>
            <person name="Wiemann S."/>
            <person name="Ansorge W."/>
        </authorList>
    </citation>
    <scope>NUCLEOTIDE SEQUENCE [MRNA]</scope>
    <source>
        <tissue>Skin</tissue>
    </source>
</reference>
<reference key="2">
    <citation type="submission" date="2002-10" db="EMBL/GenBank/DDBJ databases">
        <title>Class II beta tubulin sequence from MCF7 breast cancer cells.</title>
        <authorList>
            <person name="Banerjee A."/>
        </authorList>
    </citation>
    <scope>NUCLEOTIDE SEQUENCE [MRNA]</scope>
</reference>
<reference key="3">
    <citation type="submission" date="2004-06" db="EMBL/GenBank/DDBJ databases">
        <title>Cloning of human full open reading frames in Gateway(TM) system entry vector (pDONR201).</title>
        <authorList>
            <person name="Halleck A."/>
            <person name="Ebert L."/>
            <person name="Mkoundinya M."/>
            <person name="Schick M."/>
            <person name="Eisenstein S."/>
            <person name="Neubert P."/>
            <person name="Kstrang K."/>
            <person name="Schatten R."/>
            <person name="Shen B."/>
            <person name="Henze S."/>
            <person name="Mar W."/>
            <person name="Korn B."/>
            <person name="Zuo D."/>
            <person name="Hu Y."/>
            <person name="LaBaer J."/>
        </authorList>
    </citation>
    <scope>NUCLEOTIDE SEQUENCE [LARGE SCALE MRNA]</scope>
</reference>
<reference key="4">
    <citation type="journal article" date="2003" name="Nature">
        <title>The DNA sequence and analysis of human chromosome 6.</title>
        <authorList>
            <person name="Mungall A.J."/>
            <person name="Palmer S.A."/>
            <person name="Sims S.K."/>
            <person name="Edwards C.A."/>
            <person name="Ashurst J.L."/>
            <person name="Wilming L."/>
            <person name="Jones M.C."/>
            <person name="Horton R."/>
            <person name="Hunt S.E."/>
            <person name="Scott C.E."/>
            <person name="Gilbert J.G.R."/>
            <person name="Clamp M.E."/>
            <person name="Bethel G."/>
            <person name="Milne S."/>
            <person name="Ainscough R."/>
            <person name="Almeida J.P."/>
            <person name="Ambrose K.D."/>
            <person name="Andrews T.D."/>
            <person name="Ashwell R.I.S."/>
            <person name="Babbage A.K."/>
            <person name="Bagguley C.L."/>
            <person name="Bailey J."/>
            <person name="Banerjee R."/>
            <person name="Barker D.J."/>
            <person name="Barlow K.F."/>
            <person name="Bates K."/>
            <person name="Beare D.M."/>
            <person name="Beasley H."/>
            <person name="Beasley O."/>
            <person name="Bird C.P."/>
            <person name="Blakey S.E."/>
            <person name="Bray-Allen S."/>
            <person name="Brook J."/>
            <person name="Brown A.J."/>
            <person name="Brown J.Y."/>
            <person name="Burford D.C."/>
            <person name="Burrill W."/>
            <person name="Burton J."/>
            <person name="Carder C."/>
            <person name="Carter N.P."/>
            <person name="Chapman J.C."/>
            <person name="Clark S.Y."/>
            <person name="Clark G."/>
            <person name="Clee C.M."/>
            <person name="Clegg S."/>
            <person name="Cobley V."/>
            <person name="Collier R.E."/>
            <person name="Collins J.E."/>
            <person name="Colman L.K."/>
            <person name="Corby N.R."/>
            <person name="Coville G.J."/>
            <person name="Culley K.M."/>
            <person name="Dhami P."/>
            <person name="Davies J."/>
            <person name="Dunn M."/>
            <person name="Earthrowl M.E."/>
            <person name="Ellington A.E."/>
            <person name="Evans K.A."/>
            <person name="Faulkner L."/>
            <person name="Francis M.D."/>
            <person name="Frankish A."/>
            <person name="Frankland J."/>
            <person name="French L."/>
            <person name="Garner P."/>
            <person name="Garnett J."/>
            <person name="Ghori M.J."/>
            <person name="Gilby L.M."/>
            <person name="Gillson C.J."/>
            <person name="Glithero R.J."/>
            <person name="Grafham D.V."/>
            <person name="Grant M."/>
            <person name="Gribble S."/>
            <person name="Griffiths C."/>
            <person name="Griffiths M.N.D."/>
            <person name="Hall R."/>
            <person name="Halls K.S."/>
            <person name="Hammond S."/>
            <person name="Harley J.L."/>
            <person name="Hart E.A."/>
            <person name="Heath P.D."/>
            <person name="Heathcott R."/>
            <person name="Holmes S.J."/>
            <person name="Howden P.J."/>
            <person name="Howe K.L."/>
            <person name="Howell G.R."/>
            <person name="Huckle E."/>
            <person name="Humphray S.J."/>
            <person name="Humphries M.D."/>
            <person name="Hunt A.R."/>
            <person name="Johnson C.M."/>
            <person name="Joy A.A."/>
            <person name="Kay M."/>
            <person name="Keenan S.J."/>
            <person name="Kimberley A.M."/>
            <person name="King A."/>
            <person name="Laird G.K."/>
            <person name="Langford C."/>
            <person name="Lawlor S."/>
            <person name="Leongamornlert D.A."/>
            <person name="Leversha M."/>
            <person name="Lloyd C.R."/>
            <person name="Lloyd D.M."/>
            <person name="Loveland J.E."/>
            <person name="Lovell J."/>
            <person name="Martin S."/>
            <person name="Mashreghi-Mohammadi M."/>
            <person name="Maslen G.L."/>
            <person name="Matthews L."/>
            <person name="McCann O.T."/>
            <person name="McLaren S.J."/>
            <person name="McLay K."/>
            <person name="McMurray A."/>
            <person name="Moore M.J.F."/>
            <person name="Mullikin J.C."/>
            <person name="Niblett D."/>
            <person name="Nickerson T."/>
            <person name="Novik K.L."/>
            <person name="Oliver K."/>
            <person name="Overton-Larty E.K."/>
            <person name="Parker A."/>
            <person name="Patel R."/>
            <person name="Pearce A.V."/>
            <person name="Peck A.I."/>
            <person name="Phillimore B.J.C.T."/>
            <person name="Phillips S."/>
            <person name="Plumb R.W."/>
            <person name="Porter K.M."/>
            <person name="Ramsey Y."/>
            <person name="Ranby S.A."/>
            <person name="Rice C.M."/>
            <person name="Ross M.T."/>
            <person name="Searle S.M."/>
            <person name="Sehra H.K."/>
            <person name="Sheridan E."/>
            <person name="Skuce C.D."/>
            <person name="Smith S."/>
            <person name="Smith M."/>
            <person name="Spraggon L."/>
            <person name="Squares S.L."/>
            <person name="Steward C.A."/>
            <person name="Sycamore N."/>
            <person name="Tamlyn-Hall G."/>
            <person name="Tester J."/>
            <person name="Theaker A.J."/>
            <person name="Thomas D.W."/>
            <person name="Thorpe A."/>
            <person name="Tracey A."/>
            <person name="Tromans A."/>
            <person name="Tubby B."/>
            <person name="Wall M."/>
            <person name="Wallis J.M."/>
            <person name="West A.P."/>
            <person name="White S.S."/>
            <person name="Whitehead S.L."/>
            <person name="Whittaker H."/>
            <person name="Wild A."/>
            <person name="Willey D.J."/>
            <person name="Wilmer T.E."/>
            <person name="Wood J.M."/>
            <person name="Wray P.W."/>
            <person name="Wyatt J.C."/>
            <person name="Young L."/>
            <person name="Younger R.M."/>
            <person name="Bentley D.R."/>
            <person name="Coulson A."/>
            <person name="Durbin R.M."/>
            <person name="Hubbard T."/>
            <person name="Sulston J.E."/>
            <person name="Dunham I."/>
            <person name="Rogers J."/>
            <person name="Beck S."/>
        </authorList>
    </citation>
    <scope>NUCLEOTIDE SEQUENCE [LARGE SCALE GENOMIC DNA]</scope>
</reference>
<reference key="5">
    <citation type="journal article" date="2004" name="Genome Res.">
        <title>The status, quality, and expansion of the NIH full-length cDNA project: the Mammalian Gene Collection (MGC).</title>
        <authorList>
            <consortium name="The MGC Project Team"/>
        </authorList>
    </citation>
    <scope>NUCLEOTIDE SEQUENCE [LARGE SCALE MRNA]</scope>
    <source>
        <tissue>Eye</tissue>
        <tissue>Skin</tissue>
    </source>
</reference>
<reference key="6">
    <citation type="submission" date="2008-12" db="UniProtKB">
        <authorList>
            <person name="Lubec G."/>
            <person name="Afjehi-Sadat L."/>
            <person name="Chen W.-Q."/>
            <person name="Sun Y."/>
        </authorList>
    </citation>
    <scope>PROTEIN SEQUENCE OF 3-19; 47-58; 63-121; 163-174; 217-276; 283-306; 310-318; 325-359; 363-379 AND 381-390</scope>
    <scope>IDENTIFICATION BY MASS SPECTROMETRY</scope>
    <source>
        <tissue>Brain</tissue>
        <tissue>Cajal-Retzius cell</tissue>
        <tissue>Fetal brain cortex</tissue>
    </source>
</reference>
<reference key="7">
    <citation type="journal article" date="2006" name="Mol. Biol. Cell">
        <title>Microtubule regulation in mitosis: tubulin phosphorylation by the cyclin-dependent kinase Cdk1.</title>
        <authorList>
            <person name="Fourest-Lieuvin A."/>
            <person name="Peris L."/>
            <person name="Gache V."/>
            <person name="Garcia-Saez I."/>
            <person name="Juillan-Binard C."/>
            <person name="Lantez V."/>
            <person name="Job D."/>
        </authorList>
    </citation>
    <scope>PHOSPHORYLATION AT SER-172</scope>
</reference>
<reference key="8">
    <citation type="journal article" date="2009" name="Cell">
        <title>Evolutionary divergence of enzymatic mechanisms for posttranslational polyglycylation.</title>
        <authorList>
            <person name="Rogowski K."/>
            <person name="Juge F."/>
            <person name="van Dijk J."/>
            <person name="Wloga D."/>
            <person name="Strub J.-M."/>
            <person name="Levilliers N."/>
            <person name="Thomas D."/>
            <person name="Bre M.-H."/>
            <person name="Van Dorsselaer A."/>
            <person name="Gaertig J."/>
            <person name="Janke C."/>
        </authorList>
    </citation>
    <scope>GLYCYLATION</scope>
</reference>
<reference key="9">
    <citation type="journal article" date="2009" name="J. Biol. Chem.">
        <title>Identification and characterization of a novel nuclear protein complex involved in nuclear hormone receptor-mediated gene regulation.</title>
        <authorList>
            <person name="Garapaty S."/>
            <person name="Xu C.F."/>
            <person name="Trojer P."/>
            <person name="Mahajan M.A."/>
            <person name="Neubert T.A."/>
            <person name="Samuels H.H."/>
        </authorList>
    </citation>
    <scope>IDENTIFICATION IN A COMPLEX WITH HCFC1; MKI67; EMSY; MATR3; HSPA8; ZNF335; CCAR2; ASH2L; RBBP5 AND WDR5</scope>
</reference>
<reference key="10">
    <citation type="journal article" date="2010" name="Cytoskeleton">
        <title>Tumoral and tissue-specific expression of the major human beta-tubulin isotypes.</title>
        <authorList>
            <person name="Leandro-Garcia L.J."/>
            <person name="Leskela S."/>
            <person name="Landa I."/>
            <person name="Montero-Conde C."/>
            <person name="Lopez-Jimenez E."/>
            <person name="Leton R."/>
            <person name="Cascon A."/>
            <person name="Robledo M."/>
            <person name="Rodriguez-Antona C."/>
        </authorList>
    </citation>
    <scope>TISSUE SPECIFICITY</scope>
</reference>
<reference key="11">
    <citation type="journal article" date="2011" name="BMC Syst. Biol.">
        <title>Initial characterization of the human central proteome.</title>
        <authorList>
            <person name="Burkard T.R."/>
            <person name="Planyavsky M."/>
            <person name="Kaupe I."/>
            <person name="Breitwieser F.P."/>
            <person name="Buerckstuemmer T."/>
            <person name="Bennett K.L."/>
            <person name="Superti-Furga G."/>
            <person name="Colinge J."/>
        </authorList>
    </citation>
    <scope>IDENTIFICATION BY MASS SPECTROMETRY [LARGE SCALE ANALYSIS]</scope>
</reference>
<reference key="12">
    <citation type="journal article" date="2016" name="Cell">
        <title>Graded control of microtubule severing by tubulin glutamylation.</title>
        <authorList>
            <person name="Valenstein M.L."/>
            <person name="Roll-Mecak A."/>
        </authorList>
    </citation>
    <scope>GLUTAMYLATION</scope>
</reference>
<reference key="13">
    <citation type="journal article" date="2006" name="Science">
        <title>The consensus coding sequences of human breast and colorectal cancers.</title>
        <authorList>
            <person name="Sjoeblom T."/>
            <person name="Jones S."/>
            <person name="Wood L.D."/>
            <person name="Parsons D.W."/>
            <person name="Lin J."/>
            <person name="Barber T.D."/>
            <person name="Mandelker D."/>
            <person name="Leary R.J."/>
            <person name="Ptak J."/>
            <person name="Silliman N."/>
            <person name="Szabo S."/>
            <person name="Buckhaults P."/>
            <person name="Farrell C."/>
            <person name="Meeh P."/>
            <person name="Markowitz S.D."/>
            <person name="Willis J."/>
            <person name="Dawson D."/>
            <person name="Willson J.K.V."/>
            <person name="Gazdar A.F."/>
            <person name="Hartigan J."/>
            <person name="Wu L."/>
            <person name="Liu C."/>
            <person name="Parmigiani G."/>
            <person name="Park B.H."/>
            <person name="Bachman K.E."/>
            <person name="Papadopoulos N."/>
            <person name="Vogelstein B."/>
            <person name="Kinzler K.W."/>
            <person name="Velculescu V.E."/>
        </authorList>
    </citation>
    <scope>VARIANT [LARGE SCALE ANALYSIS] TRP-62</scope>
</reference>
<reference key="14">
    <citation type="journal article" date="2014" name="Am. J. Hum. Genet.">
        <title>De novo mutations in the beta-tubulin gene TUBB2A cause simplified gyral patterning and infantile-onset epilepsy.</title>
        <authorList>
            <person name="Cushion T.D."/>
            <person name="Paciorkowski A.R."/>
            <person name="Pilz D.T."/>
            <person name="Mullins J.G."/>
            <person name="Seltzer L.E."/>
            <person name="Marion R.W."/>
            <person name="Tuttle E."/>
            <person name="Ghoneim D."/>
            <person name="Christian S.L."/>
            <person name="Chung S.K."/>
            <person name="Rees M.I."/>
            <person name="Dobyns W.B."/>
        </authorList>
    </citation>
    <scope>VARIANTS CDCBM5 LYS-247 AND VAL-248</scope>
    <scope>CHARACTERIZATION OF VARIANTS CDCBM5 LYS-247 AND VAL-248</scope>
</reference>
<protein>
    <recommendedName>
        <fullName>Tubulin beta-2A chain</fullName>
    </recommendedName>
    <alternativeName>
        <fullName>Tubulin beta class IIa</fullName>
    </alternativeName>
</protein>
<comment type="function">
    <text>Tubulin is the major constituent of microtubules, a cylinder consisting of laterally associated linear protofilaments composed of alpha- and beta-tubulin heterodimers. Microtubules grow by the addition of GTP-tubulin dimers to the microtubule end, where a stabilizing cap forms. Below the cap, tubulin dimers are in GDP-bound state, owing to GTPase activity of alpha-tubulin.</text>
</comment>
<comment type="cofactor">
    <cofactor evidence="3">
        <name>Mg(2+)</name>
        <dbReference type="ChEBI" id="CHEBI:18420"/>
    </cofactor>
</comment>
<comment type="subunit">
    <text evidence="1 10">Interacts with ZNRF1 (By similarity). Part of a complex composed at least of ASH2L, EMSY, HCFC1, HSPA8, CCAR2, MATR3, MKI67, RBBP5, TUBB2A, WDR5 and ZNF335; this complex may have a histone H3-specific methyltransferase activity (By similarity). Dimer of alpha and beta chains. A typical microtubule is a hollow water-filled tube with an outer diameter of 25 nm and an inner diameter of 15 nM. Alpha-beta heterodimers associate head-to-tail to form protofilaments running lengthwise along the microtubule wall with the beta-tubulin subunit facing the microtubule plus end conferring a structural polarity. Microtubules usually have 13 protofilaments but different protofilament numbers can be found in some organisms and specialized cells.</text>
</comment>
<comment type="interaction">
    <interactant intactId="EBI-711595">
        <id>Q13885</id>
    </interactant>
    <interactant intactId="EBI-717666">
        <id>Q96AP0</id>
        <label>ACD</label>
    </interactant>
    <organismsDiffer>false</organismsDiffer>
    <experiments>2</experiments>
</comment>
<comment type="interaction">
    <interactant intactId="EBI-711595">
        <id>Q13885</id>
    </interactant>
    <interactant intactId="EBI-949378">
        <id>Q14457</id>
        <label>BECN1</label>
    </interactant>
    <organismsDiffer>false</organismsDiffer>
    <experiments>3</experiments>
</comment>
<comment type="interaction">
    <interactant intactId="EBI-711595">
        <id>Q13885</id>
    </interactant>
    <interactant intactId="EBI-718729">
        <id>P55212</id>
        <label>CASP6</label>
    </interactant>
    <organismsDiffer>false</organismsDiffer>
    <experiments>3</experiments>
</comment>
<comment type="interaction">
    <interactant intactId="EBI-711595">
        <id>Q13885</id>
    </interactant>
    <interactant intactId="EBI-297353">
        <id>P00533</id>
        <label>EGFR</label>
    </interactant>
    <organismsDiffer>false</organismsDiffer>
    <experiments>2</experiments>
</comment>
<comment type="interaction">
    <interactant intactId="EBI-711595">
        <id>Q13885</id>
    </interactant>
    <interactant intactId="EBI-852823">
        <id>P05412</id>
        <label>JUN</label>
    </interactant>
    <organismsDiffer>false</organismsDiffer>
    <experiments>5</experiments>
</comment>
<comment type="interaction">
    <interactant intactId="EBI-711595">
        <id>Q13885</id>
    </interactant>
    <interactant intactId="EBI-5323863">
        <id>Q5S007</id>
        <label>LRRK2</label>
    </interactant>
    <organismsDiffer>false</organismsDiffer>
    <experiments>3</experiments>
</comment>
<comment type="interaction">
    <interactant intactId="EBI-711595">
        <id>Q13885</id>
    </interactant>
    <interactant intactId="EBI-9071725">
        <id>P08247</id>
        <label>SYP</label>
    </interactant>
    <organismsDiffer>false</organismsDiffer>
    <experiments>3</experiments>
</comment>
<comment type="interaction">
    <interactant intactId="EBI-711595">
        <id>Q13885</id>
    </interactant>
    <interactant intactId="EBI-25831733">
        <id>Q96MN9-2</id>
        <label>ZNF488</label>
    </interactant>
    <organismsDiffer>false</organismsDiffer>
    <experiments>3</experiments>
</comment>
<comment type="subcellular location">
    <subcellularLocation>
        <location evidence="1">Cytoplasm</location>
        <location evidence="1">Cytoskeleton</location>
    </subcellularLocation>
</comment>
<comment type="tissue specificity">
    <text evidence="11">High expression in brain, where it represents 30% of all beta-tubulins.</text>
</comment>
<comment type="domain">
    <text evidence="2">The MREI motif is common among all beta-tubulin isoforms and may be critical for tubulin autoregulation.</text>
</comment>
<comment type="PTM">
    <text evidence="4 13">Some glutamate residues at the C-terminus are polyglutamylated, resulting in polyglutamate chains on the gamma-carboxyl group (PubMed:26875866). Polyglutamylation plays a key role in microtubule severing by spastin (SPAST). SPAST preferentially recognizes and acts on microtubules decorated with short polyglutamate tails: severing activity by SPAST increases as the number of glutamates per tubulin rises from one to eight, but decreases beyond this glutamylation threshold (PubMed:26875866). Glutamylation is also involved in cilia motility (By similarity).</text>
</comment>
<comment type="PTM">
    <text evidence="2 15">Some glutamate residues at the C-terminus are monoglycylated but not polyglycylated due to the absence of functional TTLL10 in human. Monoglycylation is mainly limited to tubulin incorporated into cilia and flagella axonemes, which is required for their stability and maintenance. Flagella glycylation controls sperm motility. Both polyglutamylation and monoglycylation can coexist on the same protein on adjacent residues, and lowering glycylation levels increases polyglutamylation, and reciprocally.</text>
</comment>
<comment type="PTM">
    <text evidence="8">Phosphorylated on Ser-172 by CDK1 during the cell cycle, from metaphase to telophase, but not in interphase. This phosphorylation inhibits tubulin incorporation into microtubules.</text>
</comment>
<comment type="disease" evidence="12">
    <disease id="DI-04097">
        <name>Cortical dysplasia, complex, with other brain malformations 5</name>
        <acronym>CDCBM5</acronym>
        <description>A disorder of aberrant neuronal migration and disturbed axonal guidance. Clinical features include seizures, global developmental delay, and various brain malformations such as a diffuse simplified gyral pattern with reduced volume of white matter, globular basal ganglia, thin and dysmorphic corpus callosum, mild brainstem hypoplasia with a flat pons, mild cerebellar vermis hypoplasia, and mildly enlarged posterior fossa.</description>
        <dbReference type="MIM" id="615763"/>
    </disease>
    <text>The disease is caused by variants affecting the gene represented in this entry.</text>
</comment>
<comment type="similarity">
    <text evidence="14">Belongs to the tubulin family.</text>
</comment>
<evidence type="ECO:0000250" key="1"/>
<evidence type="ECO:0000250" key="2">
    <source>
        <dbReference type="UniProtKB" id="P07437"/>
    </source>
</evidence>
<evidence type="ECO:0000250" key="3">
    <source>
        <dbReference type="UniProtKB" id="P68363"/>
    </source>
</evidence>
<evidence type="ECO:0000250" key="4">
    <source>
        <dbReference type="UniProtKB" id="P99024"/>
    </source>
</evidence>
<evidence type="ECO:0000250" key="5">
    <source>
        <dbReference type="UniProtKB" id="Q13509"/>
    </source>
</evidence>
<evidence type="ECO:0000250" key="6">
    <source>
        <dbReference type="UniProtKB" id="Q2T9S0"/>
    </source>
</evidence>
<evidence type="ECO:0000256" key="7">
    <source>
        <dbReference type="SAM" id="MobiDB-lite"/>
    </source>
</evidence>
<evidence type="ECO:0000269" key="8">
    <source>
    </source>
</evidence>
<evidence type="ECO:0000269" key="9">
    <source>
    </source>
</evidence>
<evidence type="ECO:0000269" key="10">
    <source>
    </source>
</evidence>
<evidence type="ECO:0000269" key="11">
    <source>
    </source>
</evidence>
<evidence type="ECO:0000269" key="12">
    <source>
    </source>
</evidence>
<evidence type="ECO:0000269" key="13">
    <source>
    </source>
</evidence>
<evidence type="ECO:0000305" key="14"/>
<evidence type="ECO:0000305" key="15">
    <source>
    </source>
</evidence>
<evidence type="ECO:0007829" key="16">
    <source>
        <dbReference type="PDB" id="7NVN"/>
    </source>
</evidence>
<keyword id="KW-0002">3D-structure</keyword>
<keyword id="KW-0007">Acetylation</keyword>
<keyword id="KW-0963">Cytoplasm</keyword>
<keyword id="KW-0206">Cytoskeleton</keyword>
<keyword id="KW-0903">Direct protein sequencing</keyword>
<keyword id="KW-0225">Disease variant</keyword>
<keyword id="KW-0342">GTP-binding</keyword>
<keyword id="KW-1017">Isopeptide bond</keyword>
<keyword id="KW-0460">Magnesium</keyword>
<keyword id="KW-0479">Metal-binding</keyword>
<keyword id="KW-0488">Methylation</keyword>
<keyword id="KW-0493">Microtubule</keyword>
<keyword id="KW-0547">Nucleotide-binding</keyword>
<keyword id="KW-0597">Phosphoprotein</keyword>
<keyword id="KW-1267">Proteomics identification</keyword>
<keyword id="KW-1185">Reference proteome</keyword>
<keyword id="KW-0832">Ubl conjugation</keyword>
<dbReference type="EMBL" id="X79535">
    <property type="protein sequence ID" value="CAA56071.1"/>
    <property type="molecule type" value="mRNA"/>
</dbReference>
<dbReference type="EMBL" id="AY159127">
    <property type="protein sequence ID" value="AAN85571.1"/>
    <property type="molecule type" value="mRNA"/>
</dbReference>
<dbReference type="EMBL" id="CR541958">
    <property type="protein sequence ID" value="CAG46756.1"/>
    <property type="molecule type" value="mRNA"/>
</dbReference>
<dbReference type="EMBL" id="AL031963">
    <property type="status" value="NOT_ANNOTATED_CDS"/>
    <property type="molecule type" value="Genomic_DNA"/>
</dbReference>
<dbReference type="EMBL" id="BC001194">
    <property type="protein sequence ID" value="AAH01194.1"/>
    <property type="molecule type" value="mRNA"/>
</dbReference>
<dbReference type="EMBL" id="BC018780">
    <property type="protein sequence ID" value="AAH18780.1"/>
    <property type="molecule type" value="mRNA"/>
</dbReference>
<dbReference type="CCDS" id="CCDS4484.1"/>
<dbReference type="PIR" id="T08726">
    <property type="entry name" value="T08726"/>
</dbReference>
<dbReference type="RefSeq" id="NP_001060.1">
    <property type="nucleotide sequence ID" value="NM_001069.3"/>
</dbReference>
<dbReference type="RefSeq" id="NP_001297244.1">
    <property type="nucleotide sequence ID" value="NM_001310315.1"/>
</dbReference>
<dbReference type="PDB" id="7NVN">
    <property type="method" value="EM"/>
    <property type="resolution" value="3.00 A"/>
    <property type="chains" value="T=1-445"/>
</dbReference>
<dbReference type="PDB" id="8V3O">
    <property type="method" value="X-ray"/>
    <property type="resolution" value="2.30 A"/>
    <property type="chains" value="I=431-445"/>
</dbReference>
<dbReference type="PDB" id="8V3P">
    <property type="method" value="X-ray"/>
    <property type="resolution" value="2.36 A"/>
    <property type="chains" value="I=431-445"/>
</dbReference>
<dbReference type="PDBsum" id="7NVN"/>
<dbReference type="PDBsum" id="8V3O"/>
<dbReference type="PDBsum" id="8V3P"/>
<dbReference type="EMDB" id="EMD-12607"/>
<dbReference type="SMR" id="Q13885"/>
<dbReference type="BioGRID" id="113131">
    <property type="interactions" value="385"/>
</dbReference>
<dbReference type="CORUM" id="Q13885"/>
<dbReference type="FunCoup" id="Q13885">
    <property type="interactions" value="1601"/>
</dbReference>
<dbReference type="IntAct" id="Q13885">
    <property type="interactions" value="173"/>
</dbReference>
<dbReference type="MINT" id="Q13885"/>
<dbReference type="STRING" id="9606.ENSP00000369703"/>
<dbReference type="ChEMBL" id="CHEMBL3797012"/>
<dbReference type="DrugBank" id="DB05147">
    <property type="generic name" value="CYT997"/>
</dbReference>
<dbReference type="DrugBank" id="DB12730">
    <property type="generic name" value="Dolastatin 10"/>
</dbReference>
<dbReference type="DrugBank" id="DB12695">
    <property type="generic name" value="Phenethyl Isothiocyanate"/>
</dbReference>
<dbReference type="DrugBank" id="DB00570">
    <property type="generic name" value="Vinblastine"/>
</dbReference>
<dbReference type="DrugCentral" id="Q13885"/>
<dbReference type="GlyGen" id="Q13885">
    <property type="glycosylation" value="7 sites, 1 O-linked glycan (7 sites)"/>
</dbReference>
<dbReference type="iPTMnet" id="Q13885"/>
<dbReference type="MetOSite" id="Q13885"/>
<dbReference type="PhosphoSitePlus" id="Q13885"/>
<dbReference type="SwissPalm" id="Q13885"/>
<dbReference type="BioMuta" id="TUBB2A"/>
<dbReference type="DMDM" id="74762137"/>
<dbReference type="jPOST" id="Q13885"/>
<dbReference type="MassIVE" id="Q13885"/>
<dbReference type="PaxDb" id="9606-ENSP00000369703"/>
<dbReference type="PeptideAtlas" id="Q13885"/>
<dbReference type="PRIDE" id="Q13885"/>
<dbReference type="ProteomicsDB" id="59713"/>
<dbReference type="Pumba" id="Q13885"/>
<dbReference type="TopDownProteomics" id="Q13885"/>
<dbReference type="ABCD" id="Q13885">
    <property type="antibodies" value="7 sequenced antibodies"/>
</dbReference>
<dbReference type="Antibodypedia" id="9372">
    <property type="antibodies" value="385 antibodies from 31 providers"/>
</dbReference>
<dbReference type="DNASU" id="7280"/>
<dbReference type="Ensembl" id="ENST00000333628.4">
    <property type="protein sequence ID" value="ENSP00000369703.2"/>
    <property type="gene ID" value="ENSG00000137267.7"/>
</dbReference>
<dbReference type="GeneID" id="7280"/>
<dbReference type="KEGG" id="hsa:7280"/>
<dbReference type="MANE-Select" id="ENST00000333628.4">
    <property type="protein sequence ID" value="ENSP00000369703.2"/>
    <property type="RefSeq nucleotide sequence ID" value="NM_001069.3"/>
    <property type="RefSeq protein sequence ID" value="NP_001060.1"/>
</dbReference>
<dbReference type="UCSC" id="uc003mvc.5">
    <property type="organism name" value="human"/>
</dbReference>
<dbReference type="AGR" id="HGNC:12412"/>
<dbReference type="CTD" id="7280"/>
<dbReference type="DisGeNET" id="7280"/>
<dbReference type="GeneCards" id="TUBB2A"/>
<dbReference type="GeneReviews" id="TUBB2A"/>
<dbReference type="HGNC" id="HGNC:12412">
    <property type="gene designation" value="TUBB2A"/>
</dbReference>
<dbReference type="HPA" id="ENSG00000137267">
    <property type="expression patterns" value="Group enriched (brain, skin)"/>
</dbReference>
<dbReference type="MalaCards" id="TUBB2A"/>
<dbReference type="MIM" id="615101">
    <property type="type" value="gene"/>
</dbReference>
<dbReference type="MIM" id="615763">
    <property type="type" value="phenotype"/>
</dbReference>
<dbReference type="neXtProt" id="NX_Q13885"/>
<dbReference type="OpenTargets" id="ENSG00000137267"/>
<dbReference type="PharmGKB" id="PA142670670"/>
<dbReference type="VEuPathDB" id="HostDB:ENSG00000137267"/>
<dbReference type="eggNOG" id="KOG1375">
    <property type="taxonomic scope" value="Eukaryota"/>
</dbReference>
<dbReference type="GeneTree" id="ENSGT00940000154150"/>
<dbReference type="HOGENOM" id="CLU_015718_1_1_1"/>
<dbReference type="InParanoid" id="Q13885"/>
<dbReference type="OMA" id="DQMRSIQ"/>
<dbReference type="OrthoDB" id="1662883at2759"/>
<dbReference type="PAN-GO" id="Q13885">
    <property type="GO annotations" value="7 GO annotations based on evolutionary models"/>
</dbReference>
<dbReference type="PhylomeDB" id="Q13885"/>
<dbReference type="TreeFam" id="TF300298"/>
<dbReference type="PathwayCommons" id="Q13885"/>
<dbReference type="Reactome" id="R-HSA-1445148">
    <property type="pathway name" value="Translocation of SLC2A4 (GLUT4) to the plasma membrane"/>
</dbReference>
<dbReference type="Reactome" id="R-HSA-190840">
    <property type="pathway name" value="Microtubule-dependent trafficking of connexons from Golgi to the plasma membrane"/>
</dbReference>
<dbReference type="Reactome" id="R-HSA-190861">
    <property type="pathway name" value="Gap junction assembly"/>
</dbReference>
<dbReference type="Reactome" id="R-HSA-2132295">
    <property type="pathway name" value="MHC class II antigen presentation"/>
</dbReference>
<dbReference type="Reactome" id="R-HSA-2467813">
    <property type="pathway name" value="Separation of Sister Chromatids"/>
</dbReference>
<dbReference type="Reactome" id="R-HSA-2500257">
    <property type="pathway name" value="Resolution of Sister Chromatid Cohesion"/>
</dbReference>
<dbReference type="Reactome" id="R-HSA-3371497">
    <property type="pathway name" value="HSP90 chaperone cycle for steroid hormone receptors (SHR) in the presence of ligand"/>
</dbReference>
<dbReference type="Reactome" id="R-HSA-380320">
    <property type="pathway name" value="Recruitment of NuMA to mitotic centrosomes"/>
</dbReference>
<dbReference type="Reactome" id="R-HSA-389957">
    <property type="pathway name" value="Prefoldin mediated transfer of substrate to CCT/TriC"/>
</dbReference>
<dbReference type="Reactome" id="R-HSA-389960">
    <property type="pathway name" value="Formation of tubulin folding intermediates by CCT/TriC"/>
</dbReference>
<dbReference type="Reactome" id="R-HSA-389977">
    <property type="pathway name" value="Post-chaperonin tubulin folding pathway"/>
</dbReference>
<dbReference type="Reactome" id="R-HSA-437239">
    <property type="pathway name" value="Recycling pathway of L1"/>
</dbReference>
<dbReference type="Reactome" id="R-HSA-5610787">
    <property type="pathway name" value="Hedgehog 'off' state"/>
</dbReference>
<dbReference type="Reactome" id="R-HSA-5617833">
    <property type="pathway name" value="Cilium Assembly"/>
</dbReference>
<dbReference type="Reactome" id="R-HSA-5620924">
    <property type="pathway name" value="Intraflagellar transport"/>
</dbReference>
<dbReference type="Reactome" id="R-HSA-5626467">
    <property type="pathway name" value="RHO GTPases activate IQGAPs"/>
</dbReference>
<dbReference type="Reactome" id="R-HSA-5663220">
    <property type="pathway name" value="RHO GTPases Activate Formins"/>
</dbReference>
<dbReference type="Reactome" id="R-HSA-6807878">
    <property type="pathway name" value="COPI-mediated anterograde transport"/>
</dbReference>
<dbReference type="Reactome" id="R-HSA-6811434">
    <property type="pathway name" value="COPI-dependent Golgi-to-ER retrograde traffic"/>
</dbReference>
<dbReference type="Reactome" id="R-HSA-6811436">
    <property type="pathway name" value="COPI-independent Golgi-to-ER retrograde traffic"/>
</dbReference>
<dbReference type="Reactome" id="R-HSA-68877">
    <property type="pathway name" value="Mitotic Prometaphase"/>
</dbReference>
<dbReference type="Reactome" id="R-HSA-8852276">
    <property type="pathway name" value="The role of GTSE1 in G2/M progression after G2 checkpoint"/>
</dbReference>
<dbReference type="Reactome" id="R-HSA-8955332">
    <property type="pathway name" value="Carboxyterminal post-translational modifications of tubulin"/>
</dbReference>
<dbReference type="Reactome" id="R-HSA-9609690">
    <property type="pathway name" value="HCMV Early Events"/>
</dbReference>
<dbReference type="Reactome" id="R-HSA-9609736">
    <property type="pathway name" value="Assembly and cell surface presentation of NMDA receptors"/>
</dbReference>
<dbReference type="Reactome" id="R-HSA-9619483">
    <property type="pathway name" value="Activation of AMPK downstream of NMDARs"/>
</dbReference>
<dbReference type="Reactome" id="R-HSA-9646399">
    <property type="pathway name" value="Aggrephagy"/>
</dbReference>
<dbReference type="Reactome" id="R-HSA-9648025">
    <property type="pathway name" value="EML4 and NUDC in mitotic spindle formation"/>
</dbReference>
<dbReference type="Reactome" id="R-HSA-9668328">
    <property type="pathway name" value="Sealing of the nuclear envelope (NE) by ESCRT-III"/>
</dbReference>
<dbReference type="Reactome" id="R-HSA-983189">
    <property type="pathway name" value="Kinesins"/>
</dbReference>
<dbReference type="Reactome" id="R-HSA-9833482">
    <property type="pathway name" value="PKR-mediated signaling"/>
</dbReference>
<dbReference type="SignaLink" id="Q13885"/>
<dbReference type="SIGNOR" id="Q13885"/>
<dbReference type="BioGRID-ORCS" id="7280">
    <property type="hits" value="20 hits in 1062 CRISPR screens"/>
</dbReference>
<dbReference type="CD-CODE" id="91857CE7">
    <property type="entry name" value="Nucleolus"/>
</dbReference>
<dbReference type="CD-CODE" id="FB4E32DD">
    <property type="entry name" value="Presynaptic clusters and postsynaptic densities"/>
</dbReference>
<dbReference type="ChiTaRS" id="TUBB2A">
    <property type="organism name" value="human"/>
</dbReference>
<dbReference type="GeneWiki" id="TUBB2A"/>
<dbReference type="GenomeRNAi" id="7280"/>
<dbReference type="Pharos" id="Q13885">
    <property type="development level" value="Tclin"/>
</dbReference>
<dbReference type="PRO" id="PR:Q13885"/>
<dbReference type="Proteomes" id="UP000005640">
    <property type="component" value="Chromosome 6"/>
</dbReference>
<dbReference type="RNAct" id="Q13885">
    <property type="molecule type" value="protein"/>
</dbReference>
<dbReference type="Bgee" id="ENSG00000137267">
    <property type="expression patterns" value="Expressed in endothelial cell and 205 other cell types or tissues"/>
</dbReference>
<dbReference type="GO" id="GO:0005737">
    <property type="term" value="C:cytoplasm"/>
    <property type="evidence" value="ECO:0000318"/>
    <property type="project" value="GO_Central"/>
</dbReference>
<dbReference type="GO" id="GO:0070062">
    <property type="term" value="C:extracellular exosome"/>
    <property type="evidence" value="ECO:0007005"/>
    <property type="project" value="UniProtKB"/>
</dbReference>
<dbReference type="GO" id="GO:1903561">
    <property type="term" value="C:extracellular vesicle"/>
    <property type="evidence" value="ECO:0007005"/>
    <property type="project" value="UniProtKB"/>
</dbReference>
<dbReference type="GO" id="GO:0045171">
    <property type="term" value="C:intercellular bridge"/>
    <property type="evidence" value="ECO:0000314"/>
    <property type="project" value="HPA"/>
</dbReference>
<dbReference type="GO" id="GO:0005874">
    <property type="term" value="C:microtubule"/>
    <property type="evidence" value="ECO:0000314"/>
    <property type="project" value="UniProtKB"/>
</dbReference>
<dbReference type="GO" id="GO:0015630">
    <property type="term" value="C:microtubule cytoskeleton"/>
    <property type="evidence" value="ECO:0000314"/>
    <property type="project" value="HPA"/>
</dbReference>
<dbReference type="GO" id="GO:0072686">
    <property type="term" value="C:mitotic spindle"/>
    <property type="evidence" value="ECO:0000314"/>
    <property type="project" value="HPA"/>
</dbReference>
<dbReference type="GO" id="GO:0005634">
    <property type="term" value="C:nucleus"/>
    <property type="evidence" value="ECO:0007005"/>
    <property type="project" value="UniProtKB"/>
</dbReference>
<dbReference type="GO" id="GO:0005525">
    <property type="term" value="F:GTP binding"/>
    <property type="evidence" value="ECO:0000318"/>
    <property type="project" value="GO_Central"/>
</dbReference>
<dbReference type="GO" id="GO:0003924">
    <property type="term" value="F:GTPase activity"/>
    <property type="evidence" value="ECO:0007669"/>
    <property type="project" value="InterPro"/>
</dbReference>
<dbReference type="GO" id="GO:0046872">
    <property type="term" value="F:metal ion binding"/>
    <property type="evidence" value="ECO:0007669"/>
    <property type="project" value="UniProtKB-KW"/>
</dbReference>
<dbReference type="GO" id="GO:0005200">
    <property type="term" value="F:structural constituent of cytoskeleton"/>
    <property type="evidence" value="ECO:0000318"/>
    <property type="project" value="GO_Central"/>
</dbReference>
<dbReference type="GO" id="GO:0021987">
    <property type="term" value="P:cerebral cortex development"/>
    <property type="evidence" value="ECO:0007669"/>
    <property type="project" value="Ensembl"/>
</dbReference>
<dbReference type="GO" id="GO:0000226">
    <property type="term" value="P:microtubule cytoskeleton organization"/>
    <property type="evidence" value="ECO:0000318"/>
    <property type="project" value="GO_Central"/>
</dbReference>
<dbReference type="GO" id="GO:0000278">
    <property type="term" value="P:mitotic cell cycle"/>
    <property type="evidence" value="ECO:0000318"/>
    <property type="project" value="GO_Central"/>
</dbReference>
<dbReference type="GO" id="GO:0001764">
    <property type="term" value="P:neuron migration"/>
    <property type="evidence" value="ECO:0000318"/>
    <property type="project" value="GO_Central"/>
</dbReference>
<dbReference type="CDD" id="cd02187">
    <property type="entry name" value="beta_tubulin"/>
    <property type="match status" value="1"/>
</dbReference>
<dbReference type="FunFam" id="1.10.287.600:FF:000006">
    <property type="entry name" value="Tubulin beta chain"/>
    <property type="match status" value="1"/>
</dbReference>
<dbReference type="FunFam" id="3.30.1330.20:FF:000002">
    <property type="entry name" value="Tubulin beta chain"/>
    <property type="match status" value="1"/>
</dbReference>
<dbReference type="FunFam" id="3.40.50.1440:FF:000003">
    <property type="entry name" value="Tubulin beta chain"/>
    <property type="match status" value="1"/>
</dbReference>
<dbReference type="Gene3D" id="1.10.287.600">
    <property type="entry name" value="Helix hairpin bin"/>
    <property type="match status" value="1"/>
</dbReference>
<dbReference type="Gene3D" id="3.30.1330.20">
    <property type="entry name" value="Tubulin/FtsZ, C-terminal domain"/>
    <property type="match status" value="1"/>
</dbReference>
<dbReference type="Gene3D" id="3.40.50.1440">
    <property type="entry name" value="Tubulin/FtsZ, GTPase domain"/>
    <property type="match status" value="1"/>
</dbReference>
<dbReference type="InterPro" id="IPR013838">
    <property type="entry name" value="Beta-tubulin_BS"/>
</dbReference>
<dbReference type="InterPro" id="IPR002453">
    <property type="entry name" value="Beta_tubulin"/>
</dbReference>
<dbReference type="InterPro" id="IPR008280">
    <property type="entry name" value="Tub_FtsZ_C"/>
</dbReference>
<dbReference type="InterPro" id="IPR000217">
    <property type="entry name" value="Tubulin"/>
</dbReference>
<dbReference type="InterPro" id="IPR037103">
    <property type="entry name" value="Tubulin/FtsZ-like_C"/>
</dbReference>
<dbReference type="InterPro" id="IPR018316">
    <property type="entry name" value="Tubulin/FtsZ_2-layer-sand-dom"/>
</dbReference>
<dbReference type="InterPro" id="IPR036525">
    <property type="entry name" value="Tubulin/FtsZ_GTPase_sf"/>
</dbReference>
<dbReference type="InterPro" id="IPR023123">
    <property type="entry name" value="Tubulin_C"/>
</dbReference>
<dbReference type="InterPro" id="IPR017975">
    <property type="entry name" value="Tubulin_CS"/>
</dbReference>
<dbReference type="InterPro" id="IPR003008">
    <property type="entry name" value="Tubulin_FtsZ_GTPase"/>
</dbReference>
<dbReference type="PANTHER" id="PTHR11588">
    <property type="entry name" value="TUBULIN"/>
    <property type="match status" value="1"/>
</dbReference>
<dbReference type="Pfam" id="PF00091">
    <property type="entry name" value="Tubulin"/>
    <property type="match status" value="1"/>
</dbReference>
<dbReference type="Pfam" id="PF03953">
    <property type="entry name" value="Tubulin_C"/>
    <property type="match status" value="1"/>
</dbReference>
<dbReference type="PRINTS" id="PR01163">
    <property type="entry name" value="BETATUBULIN"/>
</dbReference>
<dbReference type="PRINTS" id="PR01161">
    <property type="entry name" value="TUBULIN"/>
</dbReference>
<dbReference type="SMART" id="SM00864">
    <property type="entry name" value="Tubulin"/>
    <property type="match status" value="1"/>
</dbReference>
<dbReference type="SMART" id="SM00865">
    <property type="entry name" value="Tubulin_C"/>
    <property type="match status" value="1"/>
</dbReference>
<dbReference type="SUPFAM" id="SSF55307">
    <property type="entry name" value="Tubulin C-terminal domain-like"/>
    <property type="match status" value="1"/>
</dbReference>
<dbReference type="SUPFAM" id="SSF52490">
    <property type="entry name" value="Tubulin nucleotide-binding domain-like"/>
    <property type="match status" value="1"/>
</dbReference>
<dbReference type="PROSITE" id="PS00227">
    <property type="entry name" value="TUBULIN"/>
    <property type="match status" value="1"/>
</dbReference>
<dbReference type="PROSITE" id="PS00228">
    <property type="entry name" value="TUBULIN_B_AUTOREG"/>
    <property type="match status" value="1"/>
</dbReference>
<proteinExistence type="evidence at protein level"/>
<sequence>MREIVHIQAGQCGNQIGAKFWEVISDEHGIDPTGSYHGDSDLQLERINVYYNEAAGNKYVPRAILVDLEPGTMDSVRSGPFGQIFRPDNFVFGQSGAGNNWAKGHYTEGAELVDSVLDVVRKESESCDCLQGFQLTHSLGGGTGSGMGTLLISKIREEYPDRIMNTFSVMPSPKVSDTVVEPYNATLSVHQLVENTDETYSIDNEALYDICFRTLKLTTPTYGDLNHLVSATMSGVTTCLRFPGQLNADLRKLAVNMVPFPRLHFFMPGFAPLTSRGSQQYRALTVPELTQQMFDSKNMMAACDPRHGRYLTVAAIFRGRMSMKEVDEQMLNVQNKNSSYFVEWIPNNVKTAVCDIPPRGLKMSATFIGNSTAIQELFKRISEQFTAMFRRKAFLHWYTGEGMDEMEFTEAESNMNDLVSEYQQYQDATADEQGEFEEEEGEDEA</sequence>